<organism>
    <name type="scientific">Paenarthrobacter aurescens (strain TC1)</name>
    <dbReference type="NCBI Taxonomy" id="290340"/>
    <lineage>
        <taxon>Bacteria</taxon>
        <taxon>Bacillati</taxon>
        <taxon>Actinomycetota</taxon>
        <taxon>Actinomycetes</taxon>
        <taxon>Micrococcales</taxon>
        <taxon>Micrococcaceae</taxon>
        <taxon>Paenarthrobacter</taxon>
    </lineage>
</organism>
<protein>
    <recommendedName>
        <fullName evidence="1">Aspartyl/glutamyl-tRNA(Asn/Gln) amidotransferase subunit B</fullName>
        <shortName evidence="1">Asp/Glu-ADT subunit B</shortName>
        <ecNumber evidence="1">6.3.5.-</ecNumber>
    </recommendedName>
</protein>
<reference key="1">
    <citation type="journal article" date="2006" name="PLoS Genet.">
        <title>Secrets of soil survival revealed by the genome sequence of Arthrobacter aurescens TC1.</title>
        <authorList>
            <person name="Mongodin E.F."/>
            <person name="Shapir N."/>
            <person name="Daugherty S.C."/>
            <person name="DeBoy R.T."/>
            <person name="Emerson J.B."/>
            <person name="Shvartzbeyn A."/>
            <person name="Radune D."/>
            <person name="Vamathevan J."/>
            <person name="Riggs F."/>
            <person name="Grinberg V."/>
            <person name="Khouri H.M."/>
            <person name="Wackett L.P."/>
            <person name="Nelson K.E."/>
            <person name="Sadowsky M.J."/>
        </authorList>
    </citation>
    <scope>NUCLEOTIDE SEQUENCE [LARGE SCALE GENOMIC DNA]</scope>
    <source>
        <strain>TC1</strain>
    </source>
</reference>
<comment type="function">
    <text evidence="1">Allows the formation of correctly charged Asn-tRNA(Asn) or Gln-tRNA(Gln) through the transamidation of misacylated Asp-tRNA(Asn) or Glu-tRNA(Gln) in organisms which lack either or both of asparaginyl-tRNA or glutaminyl-tRNA synthetases. The reaction takes place in the presence of glutamine and ATP through an activated phospho-Asp-tRNA(Asn) or phospho-Glu-tRNA(Gln).</text>
</comment>
<comment type="catalytic activity">
    <reaction evidence="1">
        <text>L-glutamyl-tRNA(Gln) + L-glutamine + ATP + H2O = L-glutaminyl-tRNA(Gln) + L-glutamate + ADP + phosphate + H(+)</text>
        <dbReference type="Rhea" id="RHEA:17521"/>
        <dbReference type="Rhea" id="RHEA-COMP:9681"/>
        <dbReference type="Rhea" id="RHEA-COMP:9684"/>
        <dbReference type="ChEBI" id="CHEBI:15377"/>
        <dbReference type="ChEBI" id="CHEBI:15378"/>
        <dbReference type="ChEBI" id="CHEBI:29985"/>
        <dbReference type="ChEBI" id="CHEBI:30616"/>
        <dbReference type="ChEBI" id="CHEBI:43474"/>
        <dbReference type="ChEBI" id="CHEBI:58359"/>
        <dbReference type="ChEBI" id="CHEBI:78520"/>
        <dbReference type="ChEBI" id="CHEBI:78521"/>
        <dbReference type="ChEBI" id="CHEBI:456216"/>
    </reaction>
</comment>
<comment type="catalytic activity">
    <reaction evidence="1">
        <text>L-aspartyl-tRNA(Asn) + L-glutamine + ATP + H2O = L-asparaginyl-tRNA(Asn) + L-glutamate + ADP + phosphate + 2 H(+)</text>
        <dbReference type="Rhea" id="RHEA:14513"/>
        <dbReference type="Rhea" id="RHEA-COMP:9674"/>
        <dbReference type="Rhea" id="RHEA-COMP:9677"/>
        <dbReference type="ChEBI" id="CHEBI:15377"/>
        <dbReference type="ChEBI" id="CHEBI:15378"/>
        <dbReference type="ChEBI" id="CHEBI:29985"/>
        <dbReference type="ChEBI" id="CHEBI:30616"/>
        <dbReference type="ChEBI" id="CHEBI:43474"/>
        <dbReference type="ChEBI" id="CHEBI:58359"/>
        <dbReference type="ChEBI" id="CHEBI:78515"/>
        <dbReference type="ChEBI" id="CHEBI:78516"/>
        <dbReference type="ChEBI" id="CHEBI:456216"/>
    </reaction>
</comment>
<comment type="subunit">
    <text evidence="1">Heterotrimer of A, B and C subunits.</text>
</comment>
<comment type="similarity">
    <text evidence="1">Belongs to the GatB/GatE family. GatB subfamily.</text>
</comment>
<accession>A1R4R2</accession>
<sequence length="502" mass="54911">MSVDATLSFEEAMEKYDPVLGFEVHVELNTKTKMFSSAPNVFGDEPNTNVNEVDLGMPGVLPVVNKTAVESSIKIGLALNCKIAEYCRFARKNYFYPDTPKNFQTSQYDEPIAYDGYLDIELEDGTVFRVEIERAHMEEDAGKLTHMGGAAGRIQGADYSLVDYNRSGVPLVEIVTKPIEGAGSRAPELAKAYVAAIREIVKNLGVSDAKMERGNVRCDANVSLRPHGRERFGIRSETKNVNSLRAVEHAVRYEIQRHAAVLDSGEPVIQETRHWHEDTRSTTSGRPKSDADDYRYFPEPDLVPVVASREWVEELRATLPEPPAERRKRLKEAWGYSDLEFRDVVNAGVMDSIEETIAAGASADVARKWWMGEIVGRAKVADVDPSELGVTPQVIVELNKLVEDGKINNKMATQVLDGVLAGEGTPAEIVEKRGLAVVSDDGPLLEAIDAALAAQPDVAEKIRGGKVQAIGAIVGGVMKATRGQADAGRVRELILEKLGVEG</sequence>
<dbReference type="EC" id="6.3.5.-" evidence="1"/>
<dbReference type="EMBL" id="CP000474">
    <property type="protein sequence ID" value="ABM10264.1"/>
    <property type="molecule type" value="Genomic_DNA"/>
</dbReference>
<dbReference type="RefSeq" id="WP_011774171.1">
    <property type="nucleotide sequence ID" value="NC_008711.1"/>
</dbReference>
<dbReference type="SMR" id="A1R4R2"/>
<dbReference type="STRING" id="290340.AAur_1450"/>
<dbReference type="KEGG" id="aau:AAur_1450"/>
<dbReference type="eggNOG" id="COG0064">
    <property type="taxonomic scope" value="Bacteria"/>
</dbReference>
<dbReference type="HOGENOM" id="CLU_019240_0_0_11"/>
<dbReference type="OrthoDB" id="9804078at2"/>
<dbReference type="Proteomes" id="UP000000637">
    <property type="component" value="Chromosome"/>
</dbReference>
<dbReference type="GO" id="GO:0050566">
    <property type="term" value="F:asparaginyl-tRNA synthase (glutamine-hydrolyzing) activity"/>
    <property type="evidence" value="ECO:0007669"/>
    <property type="project" value="RHEA"/>
</dbReference>
<dbReference type="GO" id="GO:0005524">
    <property type="term" value="F:ATP binding"/>
    <property type="evidence" value="ECO:0007669"/>
    <property type="project" value="UniProtKB-KW"/>
</dbReference>
<dbReference type="GO" id="GO:0050567">
    <property type="term" value="F:glutaminyl-tRNA synthase (glutamine-hydrolyzing) activity"/>
    <property type="evidence" value="ECO:0007669"/>
    <property type="project" value="UniProtKB-UniRule"/>
</dbReference>
<dbReference type="GO" id="GO:0070681">
    <property type="term" value="P:glutaminyl-tRNAGln biosynthesis via transamidation"/>
    <property type="evidence" value="ECO:0007669"/>
    <property type="project" value="TreeGrafter"/>
</dbReference>
<dbReference type="GO" id="GO:0006412">
    <property type="term" value="P:translation"/>
    <property type="evidence" value="ECO:0007669"/>
    <property type="project" value="UniProtKB-UniRule"/>
</dbReference>
<dbReference type="FunFam" id="1.10.10.410:FF:000002">
    <property type="entry name" value="Aspartyl/glutamyl-tRNA(Asn/Gln) amidotransferase subunit B"/>
    <property type="match status" value="1"/>
</dbReference>
<dbReference type="Gene3D" id="1.10.10.410">
    <property type="match status" value="1"/>
</dbReference>
<dbReference type="HAMAP" id="MF_00121">
    <property type="entry name" value="GatB"/>
    <property type="match status" value="1"/>
</dbReference>
<dbReference type="InterPro" id="IPR017959">
    <property type="entry name" value="Asn/Gln-tRNA_amidoTrfase_suB/E"/>
</dbReference>
<dbReference type="InterPro" id="IPR006075">
    <property type="entry name" value="Asn/Gln-tRNA_Trfase_suB/E_cat"/>
</dbReference>
<dbReference type="InterPro" id="IPR018027">
    <property type="entry name" value="Asn/Gln_amidotransferase"/>
</dbReference>
<dbReference type="InterPro" id="IPR003789">
    <property type="entry name" value="Asn/Gln_tRNA_amidoTrase-B-like"/>
</dbReference>
<dbReference type="InterPro" id="IPR004413">
    <property type="entry name" value="GatB"/>
</dbReference>
<dbReference type="InterPro" id="IPR023168">
    <property type="entry name" value="GatB_Yqey_C_2"/>
</dbReference>
<dbReference type="InterPro" id="IPR017958">
    <property type="entry name" value="Gln-tRNA_amidoTrfase_suB_CS"/>
</dbReference>
<dbReference type="InterPro" id="IPR014746">
    <property type="entry name" value="Gln_synth/guanido_kin_cat_dom"/>
</dbReference>
<dbReference type="NCBIfam" id="TIGR00133">
    <property type="entry name" value="gatB"/>
    <property type="match status" value="1"/>
</dbReference>
<dbReference type="NCBIfam" id="NF004012">
    <property type="entry name" value="PRK05477.1-2"/>
    <property type="match status" value="1"/>
</dbReference>
<dbReference type="NCBIfam" id="NF004013">
    <property type="entry name" value="PRK05477.1-3"/>
    <property type="match status" value="1"/>
</dbReference>
<dbReference type="NCBIfam" id="NF004014">
    <property type="entry name" value="PRK05477.1-4"/>
    <property type="match status" value="1"/>
</dbReference>
<dbReference type="PANTHER" id="PTHR11659">
    <property type="entry name" value="GLUTAMYL-TRNA GLN AMIDOTRANSFERASE SUBUNIT B MITOCHONDRIAL AND PROKARYOTIC PET112-RELATED"/>
    <property type="match status" value="1"/>
</dbReference>
<dbReference type="PANTHER" id="PTHR11659:SF0">
    <property type="entry name" value="GLUTAMYL-TRNA(GLN) AMIDOTRANSFERASE SUBUNIT B, MITOCHONDRIAL"/>
    <property type="match status" value="1"/>
</dbReference>
<dbReference type="Pfam" id="PF02934">
    <property type="entry name" value="GatB_N"/>
    <property type="match status" value="1"/>
</dbReference>
<dbReference type="Pfam" id="PF02637">
    <property type="entry name" value="GatB_Yqey"/>
    <property type="match status" value="1"/>
</dbReference>
<dbReference type="SMART" id="SM00845">
    <property type="entry name" value="GatB_Yqey"/>
    <property type="match status" value="1"/>
</dbReference>
<dbReference type="SUPFAM" id="SSF89095">
    <property type="entry name" value="GatB/YqeY motif"/>
    <property type="match status" value="1"/>
</dbReference>
<dbReference type="SUPFAM" id="SSF55931">
    <property type="entry name" value="Glutamine synthetase/guanido kinase"/>
    <property type="match status" value="1"/>
</dbReference>
<dbReference type="PROSITE" id="PS01234">
    <property type="entry name" value="GATB"/>
    <property type="match status" value="1"/>
</dbReference>
<gene>
    <name evidence="1" type="primary">gatB</name>
    <name type="ordered locus">AAur_1450</name>
</gene>
<feature type="chain" id="PRO_1000015931" description="Aspartyl/glutamyl-tRNA(Asn/Gln) amidotransferase subunit B">
    <location>
        <begin position="1"/>
        <end position="502"/>
    </location>
</feature>
<feature type="region of interest" description="Disordered" evidence="2">
    <location>
        <begin position="272"/>
        <end position="293"/>
    </location>
</feature>
<evidence type="ECO:0000255" key="1">
    <source>
        <dbReference type="HAMAP-Rule" id="MF_00121"/>
    </source>
</evidence>
<evidence type="ECO:0000256" key="2">
    <source>
        <dbReference type="SAM" id="MobiDB-lite"/>
    </source>
</evidence>
<proteinExistence type="inferred from homology"/>
<keyword id="KW-0067">ATP-binding</keyword>
<keyword id="KW-0436">Ligase</keyword>
<keyword id="KW-0547">Nucleotide-binding</keyword>
<keyword id="KW-0648">Protein biosynthesis</keyword>
<name>GATB_PAEAT</name>